<protein>
    <recommendedName>
        <fullName evidence="1">Glutathione-regulated potassium-efflux system protein KefC</fullName>
    </recommendedName>
    <alternativeName>
        <fullName evidence="1">K(+)/H(+) antiporter</fullName>
    </alternativeName>
</protein>
<reference key="1">
    <citation type="journal article" date="2009" name="PLoS Genet.">
        <title>Organised genome dynamics in the Escherichia coli species results in highly diverse adaptive paths.</title>
        <authorList>
            <person name="Touchon M."/>
            <person name="Hoede C."/>
            <person name="Tenaillon O."/>
            <person name="Barbe V."/>
            <person name="Baeriswyl S."/>
            <person name="Bidet P."/>
            <person name="Bingen E."/>
            <person name="Bonacorsi S."/>
            <person name="Bouchier C."/>
            <person name="Bouvet O."/>
            <person name="Calteau A."/>
            <person name="Chiapello H."/>
            <person name="Clermont O."/>
            <person name="Cruveiller S."/>
            <person name="Danchin A."/>
            <person name="Diard M."/>
            <person name="Dossat C."/>
            <person name="Karoui M.E."/>
            <person name="Frapy E."/>
            <person name="Garry L."/>
            <person name="Ghigo J.M."/>
            <person name="Gilles A.M."/>
            <person name="Johnson J."/>
            <person name="Le Bouguenec C."/>
            <person name="Lescat M."/>
            <person name="Mangenot S."/>
            <person name="Martinez-Jehanne V."/>
            <person name="Matic I."/>
            <person name="Nassif X."/>
            <person name="Oztas S."/>
            <person name="Petit M.A."/>
            <person name="Pichon C."/>
            <person name="Rouy Z."/>
            <person name="Ruf C.S."/>
            <person name="Schneider D."/>
            <person name="Tourret J."/>
            <person name="Vacherie B."/>
            <person name="Vallenet D."/>
            <person name="Medigue C."/>
            <person name="Rocha E.P.C."/>
            <person name="Denamur E."/>
        </authorList>
    </citation>
    <scope>NUCLEOTIDE SEQUENCE [LARGE SCALE GENOMIC DNA]</scope>
    <source>
        <strain>IAI39 / ExPEC</strain>
    </source>
</reference>
<proteinExistence type="inferred from homology"/>
<gene>
    <name evidence="1" type="primary">kefC</name>
    <name type="ordered locus">ECIAI39_0048</name>
</gene>
<accession>B7NHF1</accession>
<dbReference type="EMBL" id="CU928164">
    <property type="protein sequence ID" value="CAR16189.1"/>
    <property type="molecule type" value="Genomic_DNA"/>
</dbReference>
<dbReference type="RefSeq" id="WP_000377135.1">
    <property type="nucleotide sequence ID" value="NC_011750.1"/>
</dbReference>
<dbReference type="RefSeq" id="YP_002406096.1">
    <property type="nucleotide sequence ID" value="NC_011750.1"/>
</dbReference>
<dbReference type="SMR" id="B7NHF1"/>
<dbReference type="STRING" id="585057.ECIAI39_0048"/>
<dbReference type="KEGG" id="ect:ECIAI39_0048"/>
<dbReference type="PATRIC" id="fig|585057.6.peg.52"/>
<dbReference type="HOGENOM" id="CLU_005126_9_3_6"/>
<dbReference type="Proteomes" id="UP000000749">
    <property type="component" value="Chromosome"/>
</dbReference>
<dbReference type="GO" id="GO:0005886">
    <property type="term" value="C:plasma membrane"/>
    <property type="evidence" value="ECO:0007669"/>
    <property type="project" value="UniProtKB-SubCell"/>
</dbReference>
<dbReference type="GO" id="GO:0019899">
    <property type="term" value="F:enzyme binding"/>
    <property type="evidence" value="ECO:0007669"/>
    <property type="project" value="InterPro"/>
</dbReference>
<dbReference type="GO" id="GO:0015503">
    <property type="term" value="F:glutathione-regulated potassium exporter activity"/>
    <property type="evidence" value="ECO:0007669"/>
    <property type="project" value="UniProtKB-UniRule"/>
</dbReference>
<dbReference type="GO" id="GO:0015643">
    <property type="term" value="F:toxic substance binding"/>
    <property type="evidence" value="ECO:0007669"/>
    <property type="project" value="InterPro"/>
</dbReference>
<dbReference type="GO" id="GO:1902600">
    <property type="term" value="P:proton transmembrane transport"/>
    <property type="evidence" value="ECO:0007669"/>
    <property type="project" value="InterPro"/>
</dbReference>
<dbReference type="GO" id="GO:0051595">
    <property type="term" value="P:response to methylglyoxal"/>
    <property type="evidence" value="ECO:0007669"/>
    <property type="project" value="InterPro"/>
</dbReference>
<dbReference type="FunFam" id="1.20.1530.20:FF:000001">
    <property type="entry name" value="Glutathione-regulated potassium-efflux system protein KefB"/>
    <property type="match status" value="1"/>
</dbReference>
<dbReference type="FunFam" id="3.40.50.720:FF:000036">
    <property type="entry name" value="Glutathione-regulated potassium-efflux system protein KefB"/>
    <property type="match status" value="1"/>
</dbReference>
<dbReference type="Gene3D" id="1.20.1530.20">
    <property type="match status" value="1"/>
</dbReference>
<dbReference type="Gene3D" id="3.40.50.720">
    <property type="entry name" value="NAD(P)-binding Rossmann-like Domain"/>
    <property type="match status" value="1"/>
</dbReference>
<dbReference type="HAMAP" id="MF_01413">
    <property type="entry name" value="K_H_efflux_KefC"/>
    <property type="match status" value="1"/>
</dbReference>
<dbReference type="InterPro" id="IPR006153">
    <property type="entry name" value="Cation/H_exchanger_TM"/>
</dbReference>
<dbReference type="InterPro" id="IPR004771">
    <property type="entry name" value="K/H_exchanger"/>
</dbReference>
<dbReference type="InterPro" id="IPR023941">
    <property type="entry name" value="K_H_efflux_KefC"/>
</dbReference>
<dbReference type="InterPro" id="IPR006036">
    <property type="entry name" value="K_uptake_TrkA"/>
</dbReference>
<dbReference type="InterPro" id="IPR038770">
    <property type="entry name" value="Na+/solute_symporter_sf"/>
</dbReference>
<dbReference type="InterPro" id="IPR036291">
    <property type="entry name" value="NAD(P)-bd_dom_sf"/>
</dbReference>
<dbReference type="InterPro" id="IPR003148">
    <property type="entry name" value="RCK_N"/>
</dbReference>
<dbReference type="NCBIfam" id="TIGR00932">
    <property type="entry name" value="2a37"/>
    <property type="match status" value="1"/>
</dbReference>
<dbReference type="NCBIfam" id="NF002924">
    <property type="entry name" value="PRK03562.1"/>
    <property type="match status" value="1"/>
</dbReference>
<dbReference type="PANTHER" id="PTHR46157:SF3">
    <property type="entry name" value="GLUTATHIONE-REGULATED POTASSIUM-EFFLUX SYSTEM PROTEIN KEFC"/>
    <property type="match status" value="1"/>
</dbReference>
<dbReference type="PANTHER" id="PTHR46157">
    <property type="entry name" value="K(+) EFFLUX ANTIPORTER 3, CHLOROPLASTIC"/>
    <property type="match status" value="1"/>
</dbReference>
<dbReference type="Pfam" id="PF00999">
    <property type="entry name" value="Na_H_Exchanger"/>
    <property type="match status" value="1"/>
</dbReference>
<dbReference type="Pfam" id="PF02254">
    <property type="entry name" value="TrkA_N"/>
    <property type="match status" value="1"/>
</dbReference>
<dbReference type="PRINTS" id="PR00335">
    <property type="entry name" value="KUPTAKETRKA"/>
</dbReference>
<dbReference type="SUPFAM" id="SSF51735">
    <property type="entry name" value="NAD(P)-binding Rossmann-fold domains"/>
    <property type="match status" value="1"/>
</dbReference>
<dbReference type="PROSITE" id="PS51201">
    <property type="entry name" value="RCK_N"/>
    <property type="match status" value="1"/>
</dbReference>
<evidence type="ECO:0000255" key="1">
    <source>
        <dbReference type="HAMAP-Rule" id="MF_01413"/>
    </source>
</evidence>
<evidence type="ECO:0000255" key="2">
    <source>
        <dbReference type="PROSITE-ProRule" id="PRU00543"/>
    </source>
</evidence>
<evidence type="ECO:0000256" key="3">
    <source>
        <dbReference type="SAM" id="MobiDB-lite"/>
    </source>
</evidence>
<name>KEFC_ECO7I</name>
<keyword id="KW-0050">Antiport</keyword>
<keyword id="KW-0997">Cell inner membrane</keyword>
<keyword id="KW-1003">Cell membrane</keyword>
<keyword id="KW-0406">Ion transport</keyword>
<keyword id="KW-0472">Membrane</keyword>
<keyword id="KW-0630">Potassium</keyword>
<keyword id="KW-0633">Potassium transport</keyword>
<keyword id="KW-0812">Transmembrane</keyword>
<keyword id="KW-1133">Transmembrane helix</keyword>
<keyword id="KW-0813">Transport</keyword>
<sequence>MDSHTLIQALIYLGSAALIVPIAVRLGLGSVLGYLIAGCIIGPWGLRLVTDAESILHFAEIGVVLMLFIIGLELDPQRLWKLRAAVFGGGALQMVICGGLLGLFCMLLGLRWQVAELIGMTLALSSTAIAMQAMNERNLMVTQMGRSAFAVLLFQDIAAIPLVAMIPLLVASSASTTMGAFALSALKVAGALVLVVLLGRYVTRPALRFVARSGLREVFSAVALFLVFGFGLLLEEVGLSMAMGAFLAGVLLASSEYRHALESDIEPFKGLLLGLFFIGVGMSIDFGTLLENPLRIVILLLGFLIIKIAMLWLIARPLQVPNKQRRWFAVLLGQGSEFAFVVFGAAQMANVLEPEWAKSLTLAVALSMAATPILLVILNRLEQSSTEEAREADEIDEEQPRVIIAGFGRFGQITGRLLLSSGVKMVVLDHDPDHIETLRKFGMKVFYGDATRMDLLESAGAAKAEVLINAIDDPQTNLQLTEMVKEHFPHLQIIARARDVDHYIRLRQAGVEKPERETFEGALKTGRLALESLGLGPYEARERADVFRRFNIQMVEEMAMVENDTKARAAVYKRTSAMLSEIITEDREHLSLIQRHGWQGTEEGKHTGNMADEPETKPSS</sequence>
<feature type="chain" id="PRO_1000145537" description="Glutathione-regulated potassium-efflux system protein KefC">
    <location>
        <begin position="1"/>
        <end position="620"/>
    </location>
</feature>
<feature type="transmembrane region" description="Helical" evidence="1">
    <location>
        <begin position="4"/>
        <end position="24"/>
    </location>
</feature>
<feature type="transmembrane region" description="Helical" evidence="1">
    <location>
        <begin position="26"/>
        <end position="46"/>
    </location>
</feature>
<feature type="transmembrane region" description="Helical" evidence="1">
    <location>
        <begin position="54"/>
        <end position="74"/>
    </location>
</feature>
<feature type="transmembrane region" description="Helical" evidence="1">
    <location>
        <begin position="90"/>
        <end position="110"/>
    </location>
</feature>
<feature type="transmembrane region" description="Helical" evidence="1">
    <location>
        <begin position="114"/>
        <end position="134"/>
    </location>
</feature>
<feature type="transmembrane region" description="Helical" evidence="1">
    <location>
        <begin position="149"/>
        <end position="169"/>
    </location>
</feature>
<feature type="transmembrane region" description="Helical" evidence="1">
    <location>
        <begin position="178"/>
        <end position="198"/>
    </location>
</feature>
<feature type="transmembrane region" description="Helical" evidence="1">
    <location>
        <begin position="218"/>
        <end position="238"/>
    </location>
</feature>
<feature type="transmembrane region" description="Helical" evidence="1">
    <location>
        <begin position="270"/>
        <end position="290"/>
    </location>
</feature>
<feature type="transmembrane region" description="Helical" evidence="1">
    <location>
        <begin position="294"/>
        <end position="314"/>
    </location>
</feature>
<feature type="transmembrane region" description="Helical" evidence="1">
    <location>
        <begin position="327"/>
        <end position="347"/>
    </location>
</feature>
<feature type="transmembrane region" description="Helical" evidence="1">
    <location>
        <begin position="359"/>
        <end position="379"/>
    </location>
</feature>
<feature type="domain" description="RCK N-terminal" evidence="2">
    <location>
        <begin position="399"/>
        <end position="518"/>
    </location>
</feature>
<feature type="region of interest" description="Disordered" evidence="3">
    <location>
        <begin position="597"/>
        <end position="620"/>
    </location>
</feature>
<organism>
    <name type="scientific">Escherichia coli O7:K1 (strain IAI39 / ExPEC)</name>
    <dbReference type="NCBI Taxonomy" id="585057"/>
    <lineage>
        <taxon>Bacteria</taxon>
        <taxon>Pseudomonadati</taxon>
        <taxon>Pseudomonadota</taxon>
        <taxon>Gammaproteobacteria</taxon>
        <taxon>Enterobacterales</taxon>
        <taxon>Enterobacteriaceae</taxon>
        <taxon>Escherichia</taxon>
    </lineage>
</organism>
<comment type="function">
    <text evidence="1">Pore-forming subunit of a potassium efflux system that confers protection against electrophiles. Catalyzes K(+)/H(+) antiport.</text>
</comment>
<comment type="subunit">
    <text evidence="1">Homodimer. Interacts with the regulatory subunit KefF.</text>
</comment>
<comment type="subcellular location">
    <subcellularLocation>
        <location evidence="1">Cell inner membrane</location>
        <topology evidence="1">Multi-pass membrane protein</topology>
    </subcellularLocation>
</comment>
<comment type="similarity">
    <text evidence="1">Belongs to the monovalent cation:proton antiporter 2 (CPA2) transporter (TC 2.A.37) family. KefC subfamily.</text>
</comment>